<sequence>MKKNTSIKQTVTIAINTAIYVILSCFASIPIGPNVVLETSFSFLVFVAVLFGSKVGLSVGLLGHIIKDFFLFGNVYFNWIVCSGLLGFLFGLSKNLINLKYHSFTRKKILFFWLYQVFVNVLVFGLIAPISDVWIYAQPLKLVFLQGFLVVLSNILSYSLFGIFLMSKYSNNYGKKEVLASNNCVYYKKPPLF</sequence>
<feature type="chain" id="PRO_0000382538" description="UPF0397 protein PA0141">
    <location>
        <begin position="1"/>
        <end position="193"/>
    </location>
</feature>
<feature type="transmembrane region" description="Helical" evidence="1">
    <location>
        <begin position="11"/>
        <end position="31"/>
    </location>
</feature>
<feature type="transmembrane region" description="Helical" evidence="1">
    <location>
        <begin position="43"/>
        <end position="63"/>
    </location>
</feature>
<feature type="transmembrane region" description="Helical" evidence="1">
    <location>
        <begin position="69"/>
        <end position="89"/>
    </location>
</feature>
<feature type="transmembrane region" description="Helical" evidence="1">
    <location>
        <begin position="109"/>
        <end position="129"/>
    </location>
</feature>
<feature type="transmembrane region" description="Helical" evidence="1">
    <location>
        <begin position="147"/>
        <end position="167"/>
    </location>
</feature>
<organism>
    <name type="scientific">Phytoplasma australiense</name>
    <dbReference type="NCBI Taxonomy" id="59748"/>
    <lineage>
        <taxon>Bacteria</taxon>
        <taxon>Bacillati</taxon>
        <taxon>Mycoplasmatota</taxon>
        <taxon>Mollicutes</taxon>
        <taxon>Acholeplasmatales</taxon>
        <taxon>Acholeplasmataceae</taxon>
        <taxon>Candidatus Phytoplasma</taxon>
        <taxon>16SrXII (Stolbur group)</taxon>
    </lineage>
</organism>
<keyword id="KW-1003">Cell membrane</keyword>
<keyword id="KW-0472">Membrane</keyword>
<keyword id="KW-1185">Reference proteome</keyword>
<keyword id="KW-0812">Transmembrane</keyword>
<keyword id="KW-1133">Transmembrane helix</keyword>
<gene>
    <name type="ordered locus">PA0141</name>
</gene>
<dbReference type="EMBL" id="AM422018">
    <property type="protein sequence ID" value="CAM11476.1"/>
    <property type="molecule type" value="Genomic_DNA"/>
</dbReference>
<dbReference type="SMR" id="B1V944"/>
<dbReference type="STRING" id="59748.PA0141"/>
<dbReference type="KEGG" id="pal:PA0141"/>
<dbReference type="eggNOG" id="COG4720">
    <property type="taxonomic scope" value="Bacteria"/>
</dbReference>
<dbReference type="Proteomes" id="UP000008323">
    <property type="component" value="Chromosome"/>
</dbReference>
<dbReference type="GO" id="GO:0005886">
    <property type="term" value="C:plasma membrane"/>
    <property type="evidence" value="ECO:0007669"/>
    <property type="project" value="UniProtKB-SubCell"/>
</dbReference>
<dbReference type="Gene3D" id="1.10.1760.20">
    <property type="match status" value="1"/>
</dbReference>
<dbReference type="HAMAP" id="MF_01572">
    <property type="entry name" value="UPF0397"/>
    <property type="match status" value="1"/>
</dbReference>
<dbReference type="InterPro" id="IPR009825">
    <property type="entry name" value="ECF_substrate-spec-like"/>
</dbReference>
<dbReference type="InterPro" id="IPR022914">
    <property type="entry name" value="UPF0397"/>
</dbReference>
<dbReference type="NCBIfam" id="NF010182">
    <property type="entry name" value="PRK13661.1"/>
    <property type="match status" value="1"/>
</dbReference>
<dbReference type="PANTHER" id="PTHR37815">
    <property type="entry name" value="UPF0397 PROTEIN BC_2624-RELATED"/>
    <property type="match status" value="1"/>
</dbReference>
<dbReference type="PANTHER" id="PTHR37815:SF3">
    <property type="entry name" value="UPF0397 PROTEIN SPR0429"/>
    <property type="match status" value="1"/>
</dbReference>
<dbReference type="Pfam" id="PF07155">
    <property type="entry name" value="ECF-ribofla_trS"/>
    <property type="match status" value="1"/>
</dbReference>
<proteinExistence type="inferred from homology"/>
<comment type="subcellular location">
    <subcellularLocation>
        <location evidence="1">Cell membrane</location>
        <topology evidence="1">Multi-pass membrane protein</topology>
    </subcellularLocation>
</comment>
<comment type="similarity">
    <text evidence="1">Belongs to the UPF0397 family.</text>
</comment>
<reference key="1">
    <citation type="journal article" date="2008" name="J. Bacteriol.">
        <title>Comparative genome analysis of 'Candidatus Phytoplasma australiense' (subgroup tuf-Australia I; rp-A) and 'Ca. Phytoplasma asteris' strains OY-M and AY-WB.</title>
        <authorList>
            <person name="Tran-Nguyen L.T."/>
            <person name="Kube M."/>
            <person name="Schneider B."/>
            <person name="Reinhardt R."/>
            <person name="Gibb K.S."/>
        </authorList>
    </citation>
    <scope>NUCLEOTIDE SEQUENCE [LARGE SCALE GENOMIC DNA]</scope>
</reference>
<name>Y141_PHYAS</name>
<accession>B1V944</accession>
<protein>
    <recommendedName>
        <fullName evidence="1">UPF0397 protein PA0141</fullName>
    </recommendedName>
</protein>
<evidence type="ECO:0000255" key="1">
    <source>
        <dbReference type="HAMAP-Rule" id="MF_01572"/>
    </source>
</evidence>